<evidence type="ECO:0000250" key="1">
    <source>
        <dbReference type="UniProtKB" id="Q04603"/>
    </source>
</evidence>
<evidence type="ECO:0000250" key="2">
    <source>
        <dbReference type="UniProtKB" id="Q9NRF9"/>
    </source>
</evidence>
<evidence type="ECO:0000255" key="3"/>
<evidence type="ECO:0000256" key="4">
    <source>
        <dbReference type="SAM" id="MobiDB-lite"/>
    </source>
</evidence>
<evidence type="ECO:0000305" key="5"/>
<keyword id="KW-0007">Acetylation</keyword>
<keyword id="KW-0175">Coiled coil</keyword>
<keyword id="KW-0238">DNA-binding</keyword>
<keyword id="KW-0539">Nucleus</keyword>
<keyword id="KW-0597">Phosphoprotein</keyword>
<keyword id="KW-1185">Reference proteome</keyword>
<dbReference type="EMBL" id="BT030577">
    <property type="protein sequence ID" value="ABQ13017.1"/>
    <property type="molecule type" value="mRNA"/>
</dbReference>
<dbReference type="EMBL" id="BC102772">
    <property type="protein sequence ID" value="AAI02773.1"/>
    <property type="molecule type" value="mRNA"/>
</dbReference>
<dbReference type="RefSeq" id="NP_001029562.1">
    <property type="nucleotide sequence ID" value="NM_001034390.1"/>
</dbReference>
<dbReference type="SMR" id="Q3SZN5"/>
<dbReference type="FunCoup" id="Q3SZN5">
    <property type="interactions" value="2008"/>
</dbReference>
<dbReference type="STRING" id="9913.ENSBTAP00000000316"/>
<dbReference type="PaxDb" id="9913-ENSBTAP00000000316"/>
<dbReference type="Ensembl" id="ENSBTAT00000000316.5">
    <property type="protein sequence ID" value="ENSBTAP00000000316.4"/>
    <property type="gene ID" value="ENSBTAG00000000252.6"/>
</dbReference>
<dbReference type="GeneID" id="510678"/>
<dbReference type="KEGG" id="bta:510678"/>
<dbReference type="CTD" id="54107"/>
<dbReference type="VEuPathDB" id="HostDB:ENSBTAG00000000252"/>
<dbReference type="VGNC" id="VGNC:33120">
    <property type="gene designation" value="POLE3"/>
</dbReference>
<dbReference type="eggNOG" id="KOG0870">
    <property type="taxonomic scope" value="Eukaryota"/>
</dbReference>
<dbReference type="GeneTree" id="ENSGT00940000161417"/>
<dbReference type="HOGENOM" id="CLU_066247_7_2_1"/>
<dbReference type="InParanoid" id="Q3SZN5"/>
<dbReference type="OMA" id="KQNHRTI"/>
<dbReference type="OrthoDB" id="1707486at2759"/>
<dbReference type="TreeFam" id="TF103008"/>
<dbReference type="Reactome" id="R-BTA-110314">
    <property type="pathway name" value="Recognition of DNA damage by PCNA-containing replication complex"/>
</dbReference>
<dbReference type="Reactome" id="R-BTA-5651801">
    <property type="pathway name" value="PCNA-Dependent Long Patch Base Excision Repair"/>
</dbReference>
<dbReference type="Reactome" id="R-BTA-5656169">
    <property type="pathway name" value="Termination of translesion DNA synthesis"/>
</dbReference>
<dbReference type="Reactome" id="R-BTA-5685942">
    <property type="pathway name" value="HDR through Homologous Recombination (HRR)"/>
</dbReference>
<dbReference type="Reactome" id="R-BTA-5696397">
    <property type="pathway name" value="Gap-filling DNA repair synthesis and ligation in GG-NER"/>
</dbReference>
<dbReference type="Reactome" id="R-BTA-5696400">
    <property type="pathway name" value="Dual Incision in GG-NER"/>
</dbReference>
<dbReference type="Reactome" id="R-BTA-6782135">
    <property type="pathway name" value="Dual incision in TC-NER"/>
</dbReference>
<dbReference type="Reactome" id="R-BTA-6782210">
    <property type="pathway name" value="Gap-filling DNA repair synthesis and ligation in TC-NER"/>
</dbReference>
<dbReference type="Reactome" id="R-BTA-68952">
    <property type="pathway name" value="DNA replication initiation"/>
</dbReference>
<dbReference type="Reactome" id="R-BTA-68962">
    <property type="pathway name" value="Activation of the pre-replicative complex"/>
</dbReference>
<dbReference type="Proteomes" id="UP000009136">
    <property type="component" value="Chromosome 8"/>
</dbReference>
<dbReference type="Bgee" id="ENSBTAG00000000252">
    <property type="expression patterns" value="Expressed in caput epididymis and 108 other cell types or tissues"/>
</dbReference>
<dbReference type="GO" id="GO:0140672">
    <property type="term" value="C:ATAC complex"/>
    <property type="evidence" value="ECO:0007669"/>
    <property type="project" value="Ensembl"/>
</dbReference>
<dbReference type="GO" id="GO:0008623">
    <property type="term" value="C:CHRAC"/>
    <property type="evidence" value="ECO:0000318"/>
    <property type="project" value="GO_Central"/>
</dbReference>
<dbReference type="GO" id="GO:0008622">
    <property type="term" value="C:epsilon DNA polymerase complex"/>
    <property type="evidence" value="ECO:0000250"/>
    <property type="project" value="UniProtKB"/>
</dbReference>
<dbReference type="GO" id="GO:0031490">
    <property type="term" value="F:chromatin DNA binding"/>
    <property type="evidence" value="ECO:0000318"/>
    <property type="project" value="GO_Central"/>
</dbReference>
<dbReference type="GO" id="GO:0046982">
    <property type="term" value="F:protein heterodimerization activity"/>
    <property type="evidence" value="ECO:0007669"/>
    <property type="project" value="InterPro"/>
</dbReference>
<dbReference type="GO" id="GO:0006974">
    <property type="term" value="P:DNA damage response"/>
    <property type="evidence" value="ECO:0000318"/>
    <property type="project" value="GO_Central"/>
</dbReference>
<dbReference type="GO" id="GO:0031507">
    <property type="term" value="P:heterochromatin formation"/>
    <property type="evidence" value="ECO:0000318"/>
    <property type="project" value="GO_Central"/>
</dbReference>
<dbReference type="GO" id="GO:0006272">
    <property type="term" value="P:leading strand elongation"/>
    <property type="evidence" value="ECO:0000318"/>
    <property type="project" value="GO_Central"/>
</dbReference>
<dbReference type="GO" id="GO:0000122">
    <property type="term" value="P:negative regulation of transcription by RNA polymerase II"/>
    <property type="evidence" value="ECO:0007669"/>
    <property type="project" value="Ensembl"/>
</dbReference>
<dbReference type="GO" id="GO:0006334">
    <property type="term" value="P:nucleosome assembly"/>
    <property type="evidence" value="ECO:0007669"/>
    <property type="project" value="Ensembl"/>
</dbReference>
<dbReference type="GO" id="GO:0006275">
    <property type="term" value="P:regulation of DNA replication"/>
    <property type="evidence" value="ECO:0007669"/>
    <property type="project" value="Ensembl"/>
</dbReference>
<dbReference type="CDD" id="cd22928">
    <property type="entry name" value="HFD_POLE3_DPB4"/>
    <property type="match status" value="1"/>
</dbReference>
<dbReference type="FunFam" id="1.10.20.10:FF:000041">
    <property type="entry name" value="DNA polymerase epsilon subunit 3"/>
    <property type="match status" value="1"/>
</dbReference>
<dbReference type="Gene3D" id="1.10.20.10">
    <property type="entry name" value="Histone, subunit A"/>
    <property type="match status" value="1"/>
</dbReference>
<dbReference type="InterPro" id="IPR003958">
    <property type="entry name" value="CBFA_NFYB_domain"/>
</dbReference>
<dbReference type="InterPro" id="IPR051377">
    <property type="entry name" value="DNA_Pol-Epsilon_Subunit"/>
</dbReference>
<dbReference type="InterPro" id="IPR009072">
    <property type="entry name" value="Histone-fold"/>
</dbReference>
<dbReference type="PANTHER" id="PTHR46172">
    <property type="entry name" value="DNA POLYMERASE EPSILON SUBUNIT 3"/>
    <property type="match status" value="1"/>
</dbReference>
<dbReference type="PANTHER" id="PTHR46172:SF1">
    <property type="entry name" value="DNA POLYMERASE EPSILON SUBUNIT 3"/>
    <property type="match status" value="1"/>
</dbReference>
<dbReference type="Pfam" id="PF00808">
    <property type="entry name" value="CBFD_NFYB_HMF"/>
    <property type="match status" value="1"/>
</dbReference>
<dbReference type="SUPFAM" id="SSF47113">
    <property type="entry name" value="Histone-fold"/>
    <property type="match status" value="1"/>
</dbReference>
<sequence length="147" mass="16860">MAERPEDLNLPNAVITRIIKEALPDGVNISKEARSAISRAASVFVLYATSCANNFAMKGKRKTLNASDVLSAMEEMEFQRFVTPLKEALEAYRREQKGKKEASEQKKKDKDKKTDSEEQDKSRDEDNDEDEERLEEEEQNEEEEVDN</sequence>
<accession>Q3SZN5</accession>
<gene>
    <name type="primary">POLE3</name>
</gene>
<name>DPOE3_BOVIN</name>
<protein>
    <recommendedName>
        <fullName>DNA polymerase epsilon subunit 3</fullName>
    </recommendedName>
    <alternativeName>
        <fullName>DNA polymerase II subunit 3</fullName>
    </alternativeName>
</protein>
<organism>
    <name type="scientific">Bos taurus</name>
    <name type="common">Bovine</name>
    <dbReference type="NCBI Taxonomy" id="9913"/>
    <lineage>
        <taxon>Eukaryota</taxon>
        <taxon>Metazoa</taxon>
        <taxon>Chordata</taxon>
        <taxon>Craniata</taxon>
        <taxon>Vertebrata</taxon>
        <taxon>Euteleostomi</taxon>
        <taxon>Mammalia</taxon>
        <taxon>Eutheria</taxon>
        <taxon>Laurasiatheria</taxon>
        <taxon>Artiodactyla</taxon>
        <taxon>Ruminantia</taxon>
        <taxon>Pecora</taxon>
        <taxon>Bovidae</taxon>
        <taxon>Bovinae</taxon>
        <taxon>Bos</taxon>
    </lineage>
</organism>
<feature type="initiator methionine" description="Removed" evidence="2">
    <location>
        <position position="1"/>
    </location>
</feature>
<feature type="chain" id="PRO_0000328526" description="DNA polymerase epsilon subunit 3">
    <location>
        <begin position="2"/>
        <end position="147"/>
    </location>
</feature>
<feature type="region of interest" description="Disordered" evidence="4">
    <location>
        <begin position="93"/>
        <end position="147"/>
    </location>
</feature>
<feature type="coiled-coil region" evidence="3">
    <location>
        <begin position="85"/>
        <end position="146"/>
    </location>
</feature>
<feature type="compositionally biased region" description="Basic and acidic residues" evidence="4">
    <location>
        <begin position="93"/>
        <end position="124"/>
    </location>
</feature>
<feature type="compositionally biased region" description="Acidic residues" evidence="4">
    <location>
        <begin position="125"/>
        <end position="147"/>
    </location>
</feature>
<feature type="modified residue" description="N-acetylalanine" evidence="2">
    <location>
        <position position="2"/>
    </location>
</feature>
<feature type="modified residue" description="Phosphothreonine" evidence="2">
    <location>
        <position position="83"/>
    </location>
</feature>
<feature type="modified residue" description="Phosphoserine" evidence="2">
    <location>
        <position position="122"/>
    </location>
</feature>
<comment type="function">
    <text evidence="1 2">Accessory component of the DNA polymerase epsilon complex (By similarity). Participates in DNA repair and in chromosomal DNA replication (By similarity). Forms a complex with CHRAC1 and binds naked DNA, which is then incorporated into chromatin, aided by the nucleosome-remodeling activity of ISWI/SNF2H and ACF1 (By similarity). Does not enhance nucleosome sliding activity of the ACF-5 ISWI chromatin remodeling complex (By similarity).</text>
</comment>
<comment type="subunit">
    <text evidence="2">Component of the DNA polymerase epsilon complex consisting of four subunits: the catalytic subunit POLE and the accessory subunits POLE2, POLE3 and POLE4. Interaction with POLE4 is a prerequisite for further binding with POLE and POLE2. Heterodimer with CHRAC1; binds to DNA (By similarity). Component of the CHRAC ISWI chromatin remodeling complex at least composed of SMARCA5/SNF2H, BAZ1A/ACF1, CHRAC1 and POLE3; the complex preferentially binds DNA through the CHRAC1-POLE3 heterodimer and possesses ATP-dependent nucleosome-remodeling activity (By similarity). Within the complex, the heterodimer with CHRAC1 interacts with SMARCA5/SNF2H; the interaction is direct and enhances nucleosome sliding activity by the SMARCA5/SNF2H and BAZ1A/ACF1 interaction (By similarity). Within the complex, the heterodimer with CHRAC1 interacts with BAZ1A/ACF1; the interactions are direct (By similarity).</text>
</comment>
<comment type="subcellular location">
    <subcellularLocation>
        <location evidence="5">Nucleus</location>
    </subcellularLocation>
</comment>
<reference key="1">
    <citation type="journal article" date="2005" name="BMC Genomics">
        <title>Characterization of 954 bovine full-CDS cDNA sequences.</title>
        <authorList>
            <person name="Harhay G.P."/>
            <person name="Sonstegard T.S."/>
            <person name="Keele J.W."/>
            <person name="Heaton M.P."/>
            <person name="Clawson M.L."/>
            <person name="Snelling W.M."/>
            <person name="Wiedmann R.T."/>
            <person name="Van Tassell C.P."/>
            <person name="Smith T.P.L."/>
        </authorList>
    </citation>
    <scope>NUCLEOTIDE SEQUENCE [LARGE SCALE MRNA]</scope>
</reference>
<reference key="2">
    <citation type="submission" date="2005-08" db="EMBL/GenBank/DDBJ databases">
        <authorList>
            <consortium name="NIH - Mammalian Gene Collection (MGC) project"/>
        </authorList>
    </citation>
    <scope>NUCLEOTIDE SEQUENCE [LARGE SCALE MRNA]</scope>
    <source>
        <strain>Crossbred X Angus</strain>
        <tissue>Ileum</tissue>
    </source>
</reference>
<proteinExistence type="evidence at transcript level"/>